<protein>
    <recommendedName>
        <fullName evidence="1">UPF0502 protein YceH</fullName>
    </recommendedName>
</protein>
<sequence length="215" mass="24120">MKYELTATEARVIGCLLEKQVTTPEQYPLSVNGVVTACNQKTNREPVMNLTEQEVQEQLDNLVKRHFLRTVSGFGNRVTKYEQRFCNSEFGDLKLSAAEVALVTTLLLRGAQTPGELRSRASRMHEFSDMAEVESTLERLASREDGPYVVRLAREPGKRESRYMHLFCGDVDELSLQTSAPESASGDLQSRVEALESEVAELKQRLDSLLAHLGE</sequence>
<evidence type="ECO:0000255" key="1">
    <source>
        <dbReference type="HAMAP-Rule" id="MF_01584"/>
    </source>
</evidence>
<organism>
    <name type="scientific">Salmonella enteritidis PT4 (strain P125109)</name>
    <dbReference type="NCBI Taxonomy" id="550537"/>
    <lineage>
        <taxon>Bacteria</taxon>
        <taxon>Pseudomonadati</taxon>
        <taxon>Pseudomonadota</taxon>
        <taxon>Gammaproteobacteria</taxon>
        <taxon>Enterobacterales</taxon>
        <taxon>Enterobacteriaceae</taxon>
        <taxon>Salmonella</taxon>
    </lineage>
</organism>
<reference key="1">
    <citation type="journal article" date="2008" name="Genome Res.">
        <title>Comparative genome analysis of Salmonella enteritidis PT4 and Salmonella gallinarum 287/91 provides insights into evolutionary and host adaptation pathways.</title>
        <authorList>
            <person name="Thomson N.R."/>
            <person name="Clayton D.J."/>
            <person name="Windhorst D."/>
            <person name="Vernikos G."/>
            <person name="Davidson S."/>
            <person name="Churcher C."/>
            <person name="Quail M.A."/>
            <person name="Stevens M."/>
            <person name="Jones M.A."/>
            <person name="Watson M."/>
            <person name="Barron A."/>
            <person name="Layton A."/>
            <person name="Pickard D."/>
            <person name="Kingsley R.A."/>
            <person name="Bignell A."/>
            <person name="Clark L."/>
            <person name="Harris B."/>
            <person name="Ormond D."/>
            <person name="Abdellah Z."/>
            <person name="Brooks K."/>
            <person name="Cherevach I."/>
            <person name="Chillingworth T."/>
            <person name="Woodward J."/>
            <person name="Norberczak H."/>
            <person name="Lord A."/>
            <person name="Arrowsmith C."/>
            <person name="Jagels K."/>
            <person name="Moule S."/>
            <person name="Mungall K."/>
            <person name="Saunders M."/>
            <person name="Whitehead S."/>
            <person name="Chabalgoity J.A."/>
            <person name="Maskell D."/>
            <person name="Humphreys T."/>
            <person name="Roberts M."/>
            <person name="Barrow P.A."/>
            <person name="Dougan G."/>
            <person name="Parkhill J."/>
        </authorList>
    </citation>
    <scope>NUCLEOTIDE SEQUENCE [LARGE SCALE GENOMIC DNA]</scope>
    <source>
        <strain>P125109</strain>
    </source>
</reference>
<comment type="similarity">
    <text evidence="1">Belongs to the UPF0502 family.</text>
</comment>
<gene>
    <name evidence="1" type="primary">yceH</name>
    <name type="ordered locus">SEN1880</name>
</gene>
<dbReference type="EMBL" id="AM933172">
    <property type="protein sequence ID" value="CAR33460.1"/>
    <property type="molecule type" value="Genomic_DNA"/>
</dbReference>
<dbReference type="RefSeq" id="WP_000873047.1">
    <property type="nucleotide sequence ID" value="NC_011294.1"/>
</dbReference>
<dbReference type="SMR" id="B5QXZ7"/>
<dbReference type="KEGG" id="set:SEN1880"/>
<dbReference type="HOGENOM" id="CLU_057831_2_0_6"/>
<dbReference type="Proteomes" id="UP000000613">
    <property type="component" value="Chromosome"/>
</dbReference>
<dbReference type="FunFam" id="1.10.10.10:FF:000196">
    <property type="entry name" value="UPF0502 protein YceH"/>
    <property type="match status" value="1"/>
</dbReference>
<dbReference type="Gene3D" id="1.10.10.10">
    <property type="entry name" value="Winged helix-like DNA-binding domain superfamily/Winged helix DNA-binding domain"/>
    <property type="match status" value="2"/>
</dbReference>
<dbReference type="HAMAP" id="MF_01584">
    <property type="entry name" value="UPF0502"/>
    <property type="match status" value="1"/>
</dbReference>
<dbReference type="InterPro" id="IPR007432">
    <property type="entry name" value="DUF480"/>
</dbReference>
<dbReference type="InterPro" id="IPR036388">
    <property type="entry name" value="WH-like_DNA-bd_sf"/>
</dbReference>
<dbReference type="InterPro" id="IPR036390">
    <property type="entry name" value="WH_DNA-bd_sf"/>
</dbReference>
<dbReference type="NCBIfam" id="NF008413">
    <property type="entry name" value="PRK11239.1"/>
    <property type="match status" value="1"/>
</dbReference>
<dbReference type="PANTHER" id="PTHR38768">
    <property type="entry name" value="UPF0502 PROTEIN YCEH"/>
    <property type="match status" value="1"/>
</dbReference>
<dbReference type="PANTHER" id="PTHR38768:SF1">
    <property type="entry name" value="UPF0502 PROTEIN YCEH"/>
    <property type="match status" value="1"/>
</dbReference>
<dbReference type="Pfam" id="PF04337">
    <property type="entry name" value="DUF480"/>
    <property type="match status" value="1"/>
</dbReference>
<dbReference type="SUPFAM" id="SSF46785">
    <property type="entry name" value="Winged helix' DNA-binding domain"/>
    <property type="match status" value="2"/>
</dbReference>
<proteinExistence type="inferred from homology"/>
<accession>B5QXZ7</accession>
<name>YCEH_SALEP</name>
<feature type="chain" id="PRO_1000201252" description="UPF0502 protein YceH">
    <location>
        <begin position="1"/>
        <end position="215"/>
    </location>
</feature>